<accession>Q6VN46</accession>
<accession>Q6P028</accession>
<dbReference type="EC" id="1.7.-.-" evidence="2"/>
<dbReference type="EC" id="1.11.1.-" evidence="2"/>
<dbReference type="EMBL" id="AY337025">
    <property type="protein sequence ID" value="AAR00323.1"/>
    <property type="molecule type" value="mRNA"/>
</dbReference>
<dbReference type="EMBL" id="BC056727">
    <property type="protein sequence ID" value="AAH56727.1"/>
    <property type="molecule type" value="mRNA"/>
</dbReference>
<dbReference type="EMBL" id="BC065862">
    <property type="protein sequence ID" value="AAH65862.1"/>
    <property type="molecule type" value="mRNA"/>
</dbReference>
<dbReference type="RefSeq" id="NP_001349318.1">
    <property type="nucleotide sequence ID" value="NM_001362389.1"/>
</dbReference>
<dbReference type="RefSeq" id="NP_001349319.1">
    <property type="nucleotide sequence ID" value="NM_001362390.1"/>
</dbReference>
<dbReference type="RefSeq" id="NP_956880.1">
    <property type="nucleotide sequence ID" value="NM_200586.2"/>
</dbReference>
<dbReference type="RefSeq" id="XP_005160224.1">
    <property type="nucleotide sequence ID" value="XM_005160167.3"/>
</dbReference>
<dbReference type="RefSeq" id="XP_005160225.1">
    <property type="nucleotide sequence ID" value="XM_005160168.3"/>
</dbReference>
<dbReference type="SMR" id="Q6VN46"/>
<dbReference type="FunCoup" id="Q6VN46">
    <property type="interactions" value="2119"/>
</dbReference>
<dbReference type="STRING" id="7955.ENSDARP00000039806"/>
<dbReference type="PaxDb" id="7955-ENSDARP00000120315"/>
<dbReference type="Ensembl" id="ENSDART00000039807">
    <property type="protein sequence ID" value="ENSDARP00000039806"/>
    <property type="gene ID" value="ENSDARG00000031952"/>
</dbReference>
<dbReference type="Ensembl" id="ENSDART00000133472">
    <property type="protein sequence ID" value="ENSDARP00000116402"/>
    <property type="gene ID" value="ENSDARG00000031952"/>
</dbReference>
<dbReference type="Ensembl" id="ENSDART00000136378">
    <property type="protein sequence ID" value="ENSDARP00000120315"/>
    <property type="gene ID" value="ENSDARG00000031952"/>
</dbReference>
<dbReference type="Ensembl" id="ENSDART00000138070">
    <property type="protein sequence ID" value="ENSDARP00000120260"/>
    <property type="gene ID" value="ENSDARG00000031952"/>
</dbReference>
<dbReference type="GeneID" id="393558"/>
<dbReference type="KEGG" id="dre:393558"/>
<dbReference type="AGR" id="ZFIN:ZDB-GENE-040426-1430"/>
<dbReference type="CTD" id="4151"/>
<dbReference type="ZFIN" id="ZDB-GENE-040426-1430">
    <property type="gene designation" value="mb"/>
</dbReference>
<dbReference type="eggNOG" id="KOG3378">
    <property type="taxonomic scope" value="Eukaryota"/>
</dbReference>
<dbReference type="InParanoid" id="Q6VN46"/>
<dbReference type="OMA" id="VIIRMFQ"/>
<dbReference type="OrthoDB" id="6344802at2759"/>
<dbReference type="PhylomeDB" id="Q6VN46"/>
<dbReference type="TreeFam" id="TF332967"/>
<dbReference type="Reactome" id="R-DRE-8981607">
    <property type="pathway name" value="Intracellular oxygen transport"/>
</dbReference>
<dbReference type="PRO" id="PR:Q6VN46"/>
<dbReference type="Proteomes" id="UP000000437">
    <property type="component" value="Chromosome 1"/>
</dbReference>
<dbReference type="Bgee" id="ENSDARG00000031952">
    <property type="expression patterns" value="Expressed in cardiac ventricle and 64 other cell types or tissues"/>
</dbReference>
<dbReference type="ExpressionAtlas" id="Q6VN46">
    <property type="expression patterns" value="baseline and differential"/>
</dbReference>
<dbReference type="GO" id="GO:0016528">
    <property type="term" value="C:sarcoplasm"/>
    <property type="evidence" value="ECO:0000250"/>
    <property type="project" value="UniProtKB"/>
</dbReference>
<dbReference type="GO" id="GO:0020037">
    <property type="term" value="F:heme binding"/>
    <property type="evidence" value="ECO:0007669"/>
    <property type="project" value="InterPro"/>
</dbReference>
<dbReference type="GO" id="GO:0046872">
    <property type="term" value="F:metal ion binding"/>
    <property type="evidence" value="ECO:0007669"/>
    <property type="project" value="UniProtKB-KW"/>
</dbReference>
<dbReference type="GO" id="GO:0098809">
    <property type="term" value="F:nitrite reductase activity"/>
    <property type="evidence" value="ECO:0000250"/>
    <property type="project" value="UniProtKB"/>
</dbReference>
<dbReference type="GO" id="GO:0019825">
    <property type="term" value="F:oxygen binding"/>
    <property type="evidence" value="ECO:0000318"/>
    <property type="project" value="GO_Central"/>
</dbReference>
<dbReference type="GO" id="GO:0005344">
    <property type="term" value="F:oxygen carrier activity"/>
    <property type="evidence" value="ECO:0000250"/>
    <property type="project" value="UniProtKB"/>
</dbReference>
<dbReference type="GO" id="GO:0004601">
    <property type="term" value="F:peroxidase activity"/>
    <property type="evidence" value="ECO:0000250"/>
    <property type="project" value="UniProtKB"/>
</dbReference>
<dbReference type="GO" id="GO:0048565">
    <property type="term" value="P:digestive tract development"/>
    <property type="evidence" value="ECO:0000315"/>
    <property type="project" value="ZFIN"/>
</dbReference>
<dbReference type="GO" id="GO:0015671">
    <property type="term" value="P:oxygen transport"/>
    <property type="evidence" value="ECO:0000318"/>
    <property type="project" value="GO_Central"/>
</dbReference>
<dbReference type="GO" id="GO:0019430">
    <property type="term" value="P:removal of superoxide radicals"/>
    <property type="evidence" value="ECO:0000250"/>
    <property type="project" value="UniProtKB"/>
</dbReference>
<dbReference type="GO" id="GO:0014823">
    <property type="term" value="P:response to activity"/>
    <property type="evidence" value="ECO:0000314"/>
    <property type="project" value="ZFIN"/>
</dbReference>
<dbReference type="GO" id="GO:0001666">
    <property type="term" value="P:response to hypoxia"/>
    <property type="evidence" value="ECO:0000314"/>
    <property type="project" value="ZFIN"/>
</dbReference>
<dbReference type="GO" id="GO:0001570">
    <property type="term" value="P:vasculogenesis"/>
    <property type="evidence" value="ECO:0000315"/>
    <property type="project" value="ZFIN"/>
</dbReference>
<dbReference type="Gene3D" id="6.10.140.2100">
    <property type="match status" value="1"/>
</dbReference>
<dbReference type="Gene3D" id="6.10.140.2110">
    <property type="match status" value="1"/>
</dbReference>
<dbReference type="InterPro" id="IPR000971">
    <property type="entry name" value="Globin"/>
</dbReference>
<dbReference type="InterPro" id="IPR009050">
    <property type="entry name" value="Globin-like_sf"/>
</dbReference>
<dbReference type="InterPro" id="IPR002335">
    <property type="entry name" value="Myoglobin"/>
</dbReference>
<dbReference type="PANTHER" id="PTHR47132">
    <property type="entry name" value="MYOGLOBIN"/>
    <property type="match status" value="1"/>
</dbReference>
<dbReference type="PANTHER" id="PTHR47132:SF1">
    <property type="entry name" value="MYOGLOBIN"/>
    <property type="match status" value="1"/>
</dbReference>
<dbReference type="Pfam" id="PF00042">
    <property type="entry name" value="Globin"/>
    <property type="match status" value="1"/>
</dbReference>
<dbReference type="PRINTS" id="PR00613">
    <property type="entry name" value="MYOGLOBIN"/>
</dbReference>
<dbReference type="SUPFAM" id="SSF46458">
    <property type="entry name" value="Globin-like"/>
    <property type="match status" value="1"/>
</dbReference>
<dbReference type="PROSITE" id="PS01033">
    <property type="entry name" value="GLOBIN"/>
    <property type="match status" value="1"/>
</dbReference>
<sequence length="147" mass="15583">MADHDLVLKCWGAVEADYAANGGEVLNRLFKEYPDTLKLFPKFSGISQGDLAGSPAVAAHGATVLKKLGELLKAKGDHAALLKPLANTHANIHKVALNNFRLITEVLVKVMAEKAGLDAAGQGALRRVMDAVIGDIDGYYKEIGFAG</sequence>
<keyword id="KW-0963">Cytoplasm</keyword>
<keyword id="KW-0349">Heme</keyword>
<keyword id="KW-0408">Iron</keyword>
<keyword id="KW-0479">Metal-binding</keyword>
<keyword id="KW-0514">Muscle protein</keyword>
<keyword id="KW-0560">Oxidoreductase</keyword>
<keyword id="KW-0561">Oxygen transport</keyword>
<keyword id="KW-1185">Reference proteome</keyword>
<keyword id="KW-0813">Transport</keyword>
<reference key="1">
    <citation type="journal article" date="2004" name="Comp. Biochem. Physiol.">
        <title>Structural and kinetic characterization of myoglobins from eurythermal and stenothermal fish species.</title>
        <authorList>
            <person name="Madden P.W."/>
            <person name="Babcock M.J."/>
            <person name="Vayda M.E."/>
            <person name="Cashon R.E."/>
        </authorList>
    </citation>
    <scope>NUCLEOTIDE SEQUENCE [MRNA]</scope>
</reference>
<reference key="2">
    <citation type="submission" date="2003-08" db="EMBL/GenBank/DDBJ databases">
        <authorList>
            <consortium name="NIH - Zebrafish Gene Collection (ZGC) project"/>
        </authorList>
    </citation>
    <scope>NUCLEOTIDE SEQUENCE [LARGE SCALE MRNA]</scope>
    <source>
        <tissue>Kidney</tissue>
    </source>
</reference>
<proteinExistence type="evidence at transcript level"/>
<name>MYG_DANRE</name>
<gene>
    <name type="primary">mb</name>
    <name type="ORF">zgc:65819</name>
</gene>
<comment type="function">
    <text evidence="2">Monomeric heme protein which primary function is to store oxygen and facilitate its diffusion within muscle tissues. Reversibly binds oxygen through a pentacoordinated heme iron and enables its timely and efficient release as needed during periods of heightened demand. Depending on the oxidative conditions of tissues and cells, and in addition to its ability to bind oxygen, it also has a nitrite reductase activity whereby it regulates the production of bioactive nitric oxide. Under stress conditions, like hypoxia and anoxia, it also protects cells against reactive oxygen species thanks to its pseudoperoxidase activity.</text>
</comment>
<comment type="catalytic activity">
    <reaction evidence="2">
        <text>Fe(III)-heme b-[protein] + nitric oxide + H2O = Fe(II)-heme b-[protein] + nitrite + 2 H(+)</text>
        <dbReference type="Rhea" id="RHEA:77711"/>
        <dbReference type="Rhea" id="RHEA-COMP:18975"/>
        <dbReference type="Rhea" id="RHEA-COMP:18976"/>
        <dbReference type="ChEBI" id="CHEBI:15377"/>
        <dbReference type="ChEBI" id="CHEBI:15378"/>
        <dbReference type="ChEBI" id="CHEBI:16301"/>
        <dbReference type="ChEBI" id="CHEBI:16480"/>
        <dbReference type="ChEBI" id="CHEBI:55376"/>
        <dbReference type="ChEBI" id="CHEBI:60344"/>
    </reaction>
    <physiologicalReaction direction="right-to-left" evidence="2">
        <dbReference type="Rhea" id="RHEA:77713"/>
    </physiologicalReaction>
</comment>
<comment type="catalytic activity">
    <reaction evidence="2">
        <text>H2O2 + AH2 = A + 2 H2O</text>
        <dbReference type="Rhea" id="RHEA:30275"/>
        <dbReference type="ChEBI" id="CHEBI:13193"/>
        <dbReference type="ChEBI" id="CHEBI:15377"/>
        <dbReference type="ChEBI" id="CHEBI:16240"/>
        <dbReference type="ChEBI" id="CHEBI:17499"/>
    </reaction>
</comment>
<comment type="subunit">
    <text evidence="3">Monomeric.</text>
</comment>
<comment type="subcellular location">
    <subcellularLocation>
        <location evidence="2">Cytoplasm</location>
        <location evidence="2">Sarcoplasm</location>
    </subcellularLocation>
</comment>
<comment type="similarity">
    <text evidence="6">Belongs to the globin family.</text>
</comment>
<organism>
    <name type="scientific">Danio rerio</name>
    <name type="common">Zebrafish</name>
    <name type="synonym">Brachydanio rerio</name>
    <dbReference type="NCBI Taxonomy" id="7955"/>
    <lineage>
        <taxon>Eukaryota</taxon>
        <taxon>Metazoa</taxon>
        <taxon>Chordata</taxon>
        <taxon>Craniata</taxon>
        <taxon>Vertebrata</taxon>
        <taxon>Euteleostomi</taxon>
        <taxon>Actinopterygii</taxon>
        <taxon>Neopterygii</taxon>
        <taxon>Teleostei</taxon>
        <taxon>Ostariophysi</taxon>
        <taxon>Cypriniformes</taxon>
        <taxon>Danionidae</taxon>
        <taxon>Danioninae</taxon>
        <taxon>Danio</taxon>
    </lineage>
</organism>
<protein>
    <recommendedName>
        <fullName>Myoglobin</fullName>
    </recommendedName>
    <alternativeName>
        <fullName evidence="2">Nitrite reductase MB</fullName>
        <ecNumber evidence="2">1.7.-.-</ecNumber>
    </alternativeName>
    <alternativeName>
        <fullName evidence="2">Pseudoperoxidase MB</fullName>
        <ecNumber evidence="2">1.11.1.-</ecNumber>
    </alternativeName>
</protein>
<evidence type="ECO:0000250" key="1"/>
<evidence type="ECO:0000250" key="2">
    <source>
        <dbReference type="UniProtKB" id="P02144"/>
    </source>
</evidence>
<evidence type="ECO:0000250" key="3">
    <source>
        <dbReference type="UniProtKB" id="P02185"/>
    </source>
</evidence>
<evidence type="ECO:0000250" key="4">
    <source>
        <dbReference type="UniProtKB" id="P02189"/>
    </source>
</evidence>
<evidence type="ECO:0000250" key="5">
    <source>
        <dbReference type="UniProtKB" id="P68082"/>
    </source>
</evidence>
<evidence type="ECO:0000255" key="6">
    <source>
        <dbReference type="PROSITE-ProRule" id="PRU00238"/>
    </source>
</evidence>
<evidence type="ECO:0000305" key="7"/>
<feature type="initiator methionine" description="Removed" evidence="1">
    <location>
        <position position="1"/>
    </location>
</feature>
<feature type="chain" id="PRO_0000053360" description="Myoglobin">
    <location>
        <begin position="2"/>
        <end position="147"/>
    </location>
</feature>
<feature type="domain" description="Globin" evidence="6">
    <location>
        <begin position="2"/>
        <end position="141"/>
    </location>
</feature>
<feature type="binding site" evidence="5">
    <location>
        <position position="60"/>
    </location>
    <ligand>
        <name>nitrite</name>
        <dbReference type="ChEBI" id="CHEBI:16301"/>
    </ligand>
</feature>
<feature type="binding site" evidence="4 6">
    <location>
        <position position="60"/>
    </location>
    <ligand>
        <name>O2</name>
        <dbReference type="ChEBI" id="CHEBI:15379"/>
    </ligand>
</feature>
<feature type="binding site" description="proximal binding residue" evidence="2">
    <location>
        <position position="89"/>
    </location>
    <ligand>
        <name>heme b</name>
        <dbReference type="ChEBI" id="CHEBI:60344"/>
    </ligand>
    <ligandPart>
        <name>Fe</name>
        <dbReference type="ChEBI" id="CHEBI:18248"/>
    </ligandPart>
</feature>
<feature type="sequence conflict" description="In Ref. 1; AAR00323." evidence="7" ref="1">
    <original>D</original>
    <variation>G</variation>
    <location>
        <position position="137"/>
    </location>
</feature>